<proteinExistence type="inferred from homology"/>
<feature type="chain" id="PRO_1000080281" description="Lipid-A-disaccharide synthase">
    <location>
        <begin position="1"/>
        <end position="375"/>
    </location>
</feature>
<protein>
    <recommendedName>
        <fullName evidence="1">Lipid-A-disaccharide synthase</fullName>
        <ecNumber evidence="1">2.4.1.182</ecNumber>
    </recommendedName>
</protein>
<reference key="1">
    <citation type="submission" date="2008-01" db="EMBL/GenBank/DDBJ databases">
        <title>Complete sequence of Pseudomonas putida GB-1.</title>
        <authorList>
            <consortium name="US DOE Joint Genome Institute"/>
            <person name="Copeland A."/>
            <person name="Lucas S."/>
            <person name="Lapidus A."/>
            <person name="Barry K."/>
            <person name="Glavina del Rio T."/>
            <person name="Dalin E."/>
            <person name="Tice H."/>
            <person name="Pitluck S."/>
            <person name="Bruce D."/>
            <person name="Goodwin L."/>
            <person name="Chertkov O."/>
            <person name="Brettin T."/>
            <person name="Detter J.C."/>
            <person name="Han C."/>
            <person name="Kuske C.R."/>
            <person name="Schmutz J."/>
            <person name="Larimer F."/>
            <person name="Land M."/>
            <person name="Hauser L."/>
            <person name="Kyrpides N."/>
            <person name="Kim E."/>
            <person name="McCarthy J.K."/>
            <person name="Richardson P."/>
        </authorList>
    </citation>
    <scope>NUCLEOTIDE SEQUENCE [LARGE SCALE GENOMIC DNA]</scope>
    <source>
        <strain>GB-1</strain>
    </source>
</reference>
<evidence type="ECO:0000255" key="1">
    <source>
        <dbReference type="HAMAP-Rule" id="MF_00392"/>
    </source>
</evidence>
<name>LPXB_PSEPG</name>
<comment type="function">
    <text evidence="1">Condensation of UDP-2,3-diacylglucosamine and 2,3-diacylglucosamine-1-phosphate to form lipid A disaccharide, a precursor of lipid A, a phosphorylated glycolipid that anchors the lipopolysaccharide to the outer membrane of the cell.</text>
</comment>
<comment type="catalytic activity">
    <reaction evidence="1">
        <text>a lipid X + a UDP-2-N,3-O-bis[(3R)-3-hydroxyacyl]-alpha-D-glucosamine = a lipid A disaccharide + UDP + H(+)</text>
        <dbReference type="Rhea" id="RHEA:67828"/>
        <dbReference type="ChEBI" id="CHEBI:15378"/>
        <dbReference type="ChEBI" id="CHEBI:58223"/>
        <dbReference type="ChEBI" id="CHEBI:137748"/>
        <dbReference type="ChEBI" id="CHEBI:176338"/>
        <dbReference type="ChEBI" id="CHEBI:176343"/>
        <dbReference type="EC" id="2.4.1.182"/>
    </reaction>
</comment>
<comment type="pathway">
    <text evidence="1">Bacterial outer membrane biogenesis; LPS lipid A biosynthesis.</text>
</comment>
<comment type="similarity">
    <text evidence="1">Belongs to the LpxB family.</text>
</comment>
<accession>B0KSB2</accession>
<keyword id="KW-0328">Glycosyltransferase</keyword>
<keyword id="KW-0441">Lipid A biosynthesis</keyword>
<keyword id="KW-0444">Lipid biosynthesis</keyword>
<keyword id="KW-0443">Lipid metabolism</keyword>
<keyword id="KW-0808">Transferase</keyword>
<dbReference type="EC" id="2.4.1.182" evidence="1"/>
<dbReference type="EMBL" id="CP000926">
    <property type="protein sequence ID" value="ABY97067.1"/>
    <property type="molecule type" value="Genomic_DNA"/>
</dbReference>
<dbReference type="RefSeq" id="WP_012270846.1">
    <property type="nucleotide sequence ID" value="NC_010322.1"/>
</dbReference>
<dbReference type="SMR" id="B0KSB2"/>
<dbReference type="CAZy" id="GT19">
    <property type="family name" value="Glycosyltransferase Family 19"/>
</dbReference>
<dbReference type="KEGG" id="ppg:PputGB1_1159"/>
<dbReference type="eggNOG" id="COG0763">
    <property type="taxonomic scope" value="Bacteria"/>
</dbReference>
<dbReference type="HOGENOM" id="CLU_036577_3_1_6"/>
<dbReference type="UniPathway" id="UPA00973"/>
<dbReference type="Proteomes" id="UP000002157">
    <property type="component" value="Chromosome"/>
</dbReference>
<dbReference type="GO" id="GO:0016020">
    <property type="term" value="C:membrane"/>
    <property type="evidence" value="ECO:0007669"/>
    <property type="project" value="GOC"/>
</dbReference>
<dbReference type="GO" id="GO:0008915">
    <property type="term" value="F:lipid-A-disaccharide synthase activity"/>
    <property type="evidence" value="ECO:0007669"/>
    <property type="project" value="UniProtKB-UniRule"/>
</dbReference>
<dbReference type="GO" id="GO:0005543">
    <property type="term" value="F:phospholipid binding"/>
    <property type="evidence" value="ECO:0007669"/>
    <property type="project" value="TreeGrafter"/>
</dbReference>
<dbReference type="GO" id="GO:0009245">
    <property type="term" value="P:lipid A biosynthetic process"/>
    <property type="evidence" value="ECO:0007669"/>
    <property type="project" value="UniProtKB-UniRule"/>
</dbReference>
<dbReference type="Gene3D" id="3.40.50.2000">
    <property type="entry name" value="Glycogen Phosphorylase B"/>
    <property type="match status" value="1"/>
</dbReference>
<dbReference type="HAMAP" id="MF_00392">
    <property type="entry name" value="LpxB"/>
    <property type="match status" value="1"/>
</dbReference>
<dbReference type="InterPro" id="IPR003835">
    <property type="entry name" value="Glyco_trans_19"/>
</dbReference>
<dbReference type="NCBIfam" id="TIGR00215">
    <property type="entry name" value="lpxB"/>
    <property type="match status" value="1"/>
</dbReference>
<dbReference type="PANTHER" id="PTHR30372">
    <property type="entry name" value="LIPID-A-DISACCHARIDE SYNTHASE"/>
    <property type="match status" value="1"/>
</dbReference>
<dbReference type="PANTHER" id="PTHR30372:SF4">
    <property type="entry name" value="LIPID-A-DISACCHARIDE SYNTHASE, MITOCHONDRIAL-RELATED"/>
    <property type="match status" value="1"/>
</dbReference>
<dbReference type="Pfam" id="PF02684">
    <property type="entry name" value="LpxB"/>
    <property type="match status" value="1"/>
</dbReference>
<dbReference type="SUPFAM" id="SSF53756">
    <property type="entry name" value="UDP-Glycosyltransferase/glycogen phosphorylase"/>
    <property type="match status" value="1"/>
</dbReference>
<organism>
    <name type="scientific">Pseudomonas putida (strain GB-1)</name>
    <dbReference type="NCBI Taxonomy" id="76869"/>
    <lineage>
        <taxon>Bacteria</taxon>
        <taxon>Pseudomonadati</taxon>
        <taxon>Pseudomonadota</taxon>
        <taxon>Gammaproteobacteria</taxon>
        <taxon>Pseudomonadales</taxon>
        <taxon>Pseudomonadaceae</taxon>
        <taxon>Pseudomonas</taxon>
    </lineage>
</organism>
<sequence>MAQLCVALVAGEASGDILGSGLMRALKARHPDVRFIGVGGPLMEAEGLQSYFPMERLAVMGLVEVLGRLRELLKRRKLLIQTLIDEKPDVFIGIDAPDFTLNIELKLRQAGIKTVHYVSPSVWAWRQKRVLKIREGCDLMLTLLPFEARFYEEQGVPVRFVGHPLADTIPLEADRSVARAALGLGEGPIVALMPGSRGGEVGRLGALFLDAAEHLCQQVPGVRFVLPCANAARRAQVEHMLEGRQLPLTLLDGQSHQALAACDAVLIASGTATLEALLYKRPMVVAYRLAPLTYWILKRLVKSPYVSLPNLLAQRELVPELLQDQATSQALANTLAPLVRDGSQQTERFDEIHRTLRRDASNQAAEAVLALLKDR</sequence>
<gene>
    <name evidence="1" type="primary">lpxB</name>
    <name type="ordered locus">PputGB1_1159</name>
</gene>